<dbReference type="EMBL" id="AJ248287">
    <property type="protein sequence ID" value="CAB50329.1"/>
    <property type="molecule type" value="Genomic_DNA"/>
</dbReference>
<dbReference type="EMBL" id="HE613800">
    <property type="protein sequence ID" value="CCE70869.1"/>
    <property type="molecule type" value="Genomic_DNA"/>
</dbReference>
<dbReference type="PIR" id="D75054">
    <property type="entry name" value="D75054"/>
</dbReference>
<dbReference type="RefSeq" id="WP_010868539.1">
    <property type="nucleotide sequence ID" value="NC_000868.1"/>
</dbReference>
<dbReference type="SMR" id="Q9UYT3"/>
<dbReference type="STRING" id="272844.PAB1433"/>
<dbReference type="KEGG" id="pab:PAB1433"/>
<dbReference type="PATRIC" id="fig|272844.11.peg.1514"/>
<dbReference type="eggNOG" id="arCOG04454">
    <property type="taxonomic scope" value="Archaea"/>
</dbReference>
<dbReference type="HOGENOM" id="CLU_037423_3_0_2"/>
<dbReference type="OrthoDB" id="85198at2157"/>
<dbReference type="PhylomeDB" id="Q9UYT3"/>
<dbReference type="Proteomes" id="UP000000810">
    <property type="component" value="Chromosome"/>
</dbReference>
<dbReference type="Proteomes" id="UP000009139">
    <property type="component" value="Chromosome"/>
</dbReference>
<dbReference type="GO" id="GO:0005737">
    <property type="term" value="C:cytoplasm"/>
    <property type="evidence" value="ECO:0007669"/>
    <property type="project" value="TreeGrafter"/>
</dbReference>
<dbReference type="GO" id="GO:0046872">
    <property type="term" value="F:metal ion binding"/>
    <property type="evidence" value="ECO:0007669"/>
    <property type="project" value="UniProtKB-KW"/>
</dbReference>
<dbReference type="FunFam" id="3.40.1390.30:FF:000001">
    <property type="entry name" value="GTP cyclohydrolase 1 type 2"/>
    <property type="match status" value="1"/>
</dbReference>
<dbReference type="Gene3D" id="3.40.1390.30">
    <property type="entry name" value="NIF3 (NGG1p interacting factor 3)-like"/>
    <property type="match status" value="2"/>
</dbReference>
<dbReference type="InterPro" id="IPR002678">
    <property type="entry name" value="DUF34/NIF3"/>
</dbReference>
<dbReference type="InterPro" id="IPR036069">
    <property type="entry name" value="DUF34/NIF3_sf"/>
</dbReference>
<dbReference type="NCBIfam" id="TIGR00486">
    <property type="entry name" value="YbgI_SA1388"/>
    <property type="match status" value="1"/>
</dbReference>
<dbReference type="PANTHER" id="PTHR13799:SF14">
    <property type="entry name" value="GTP CYCLOHYDROLASE 1 TYPE 2 HOMOLOG"/>
    <property type="match status" value="1"/>
</dbReference>
<dbReference type="PANTHER" id="PTHR13799">
    <property type="entry name" value="NGG1 INTERACTING FACTOR 3"/>
    <property type="match status" value="1"/>
</dbReference>
<dbReference type="Pfam" id="PF01784">
    <property type="entry name" value="DUF34_NIF3"/>
    <property type="match status" value="1"/>
</dbReference>
<dbReference type="SUPFAM" id="SSF102705">
    <property type="entry name" value="NIF3 (NGG1p interacting factor 3)-like"/>
    <property type="match status" value="1"/>
</dbReference>
<evidence type="ECO:0000250" key="1">
    <source>
        <dbReference type="UniProtKB" id="P0AFP6"/>
    </source>
</evidence>
<evidence type="ECO:0000250" key="2">
    <source>
        <dbReference type="UniProtKB" id="Q58337"/>
    </source>
</evidence>
<evidence type="ECO:0000305" key="3"/>
<organism>
    <name type="scientific">Pyrococcus abyssi (strain GE5 / Orsay)</name>
    <dbReference type="NCBI Taxonomy" id="272844"/>
    <lineage>
        <taxon>Archaea</taxon>
        <taxon>Methanobacteriati</taxon>
        <taxon>Methanobacteriota</taxon>
        <taxon>Thermococci</taxon>
        <taxon>Thermococcales</taxon>
        <taxon>Thermococcaceae</taxon>
        <taxon>Pyrococcus</taxon>
    </lineage>
</organism>
<keyword id="KW-0479">Metal-binding</keyword>
<protein>
    <recommendedName>
        <fullName>GTP cyclohydrolase 1 type 2 homolog</fullName>
    </recommendedName>
</protein>
<accession>Q9UYT3</accession>
<accession>G8ZHN2</accession>
<comment type="subunit">
    <text evidence="2">Homohexamer.</text>
</comment>
<comment type="similarity">
    <text evidence="3">Belongs to the GTP cyclohydrolase I type 2/NIF3 family.</text>
</comment>
<name>GCH1L_PYRAB</name>
<gene>
    <name type="ordered locus">PYRAB14240</name>
    <name type="ORF">PAB1433</name>
</gene>
<reference key="1">
    <citation type="journal article" date="2003" name="Mol. Microbiol.">
        <title>An integrated analysis of the genome of the hyperthermophilic archaeon Pyrococcus abyssi.</title>
        <authorList>
            <person name="Cohen G.N."/>
            <person name="Barbe V."/>
            <person name="Flament D."/>
            <person name="Galperin M."/>
            <person name="Heilig R."/>
            <person name="Lecompte O."/>
            <person name="Poch O."/>
            <person name="Prieur D."/>
            <person name="Querellou J."/>
            <person name="Ripp R."/>
            <person name="Thierry J.-C."/>
            <person name="Van der Oost J."/>
            <person name="Weissenbach J."/>
            <person name="Zivanovic Y."/>
            <person name="Forterre P."/>
        </authorList>
    </citation>
    <scope>NUCLEOTIDE SEQUENCE [LARGE SCALE GENOMIC DNA]</scope>
    <source>
        <strain>GE5 / Orsay</strain>
    </source>
</reference>
<reference key="2">
    <citation type="journal article" date="2012" name="Curr. Microbiol.">
        <title>Re-annotation of two hyperthermophilic archaea Pyrococcus abyssi GE5 and Pyrococcus furiosus DSM 3638.</title>
        <authorList>
            <person name="Gao J."/>
            <person name="Wang J."/>
        </authorList>
    </citation>
    <scope>GENOME REANNOTATION</scope>
    <source>
        <strain>GE5 / Orsay</strain>
    </source>
</reference>
<proteinExistence type="inferred from homology"/>
<feature type="chain" id="PRO_0000147350" description="GTP cyclohydrolase 1 type 2 homolog">
    <location>
        <begin position="1"/>
        <end position="250"/>
    </location>
</feature>
<feature type="binding site" evidence="1">
    <location>
        <position position="63"/>
    </location>
    <ligand>
        <name>a divalent metal cation</name>
        <dbReference type="ChEBI" id="CHEBI:60240"/>
        <label>1</label>
    </ligand>
</feature>
<feature type="binding site" evidence="1">
    <location>
        <position position="64"/>
    </location>
    <ligand>
        <name>a divalent metal cation</name>
        <dbReference type="ChEBI" id="CHEBI:60240"/>
        <label>2</label>
    </ligand>
</feature>
<feature type="binding site" evidence="1">
    <location>
        <position position="100"/>
    </location>
    <ligand>
        <name>a divalent metal cation</name>
        <dbReference type="ChEBI" id="CHEBI:60240"/>
        <label>1</label>
    </ligand>
</feature>
<feature type="binding site" evidence="1">
    <location>
        <position position="218"/>
    </location>
    <ligand>
        <name>a divalent metal cation</name>
        <dbReference type="ChEBI" id="CHEBI:60240"/>
        <label>2</label>
    </ligand>
</feature>
<feature type="binding site" evidence="1">
    <location>
        <position position="222"/>
    </location>
    <ligand>
        <name>a divalent metal cation</name>
        <dbReference type="ChEBI" id="CHEBI:60240"/>
        <label>1</label>
    </ligand>
</feature>
<feature type="binding site" evidence="1">
    <location>
        <position position="222"/>
    </location>
    <ligand>
        <name>a divalent metal cation</name>
        <dbReference type="ChEBI" id="CHEBI:60240"/>
        <label>2</label>
    </ligand>
</feature>
<sequence length="250" mass="27569">MEREEIVSFLDEYLSISSYPDKSSNGLQVEGKEEVERIAFAVDACLDTIAKARAFNADMLIVHHGIIWGGVSYVKGLFAKRLKALLSSEMNLYVAHIPLDVHPEVGNNVQLLKLLNLEPLEPFGEYKGIKIGYIGEFEEPKPLPMIAQILAEKLPVDYVRSYEFGLQEIKRVAVVSGAGGFAIEEASEKADLLITGEISHADYRTAEDLRVSVIAAGHYATETLGVKALMKLVREKFGVKTIFIDSPTGL</sequence>